<dbReference type="EC" id="7.1.1.9"/>
<dbReference type="EMBL" id="AJ001588">
    <property type="protein sequence ID" value="CAA04849.1"/>
    <property type="molecule type" value="Genomic_DNA"/>
</dbReference>
<dbReference type="PIR" id="T11482">
    <property type="entry name" value="T11482"/>
</dbReference>
<dbReference type="RefSeq" id="NP_007551.1">
    <property type="nucleotide sequence ID" value="NC_001913.1"/>
</dbReference>
<dbReference type="SMR" id="O79429"/>
<dbReference type="FunCoup" id="O79429">
    <property type="interactions" value="74"/>
</dbReference>
<dbReference type="STRING" id="9986.ENSOCUP00000026181"/>
<dbReference type="iPTMnet" id="O79429"/>
<dbReference type="PaxDb" id="9986-ENSOCUP00000026181"/>
<dbReference type="Ensembl" id="ENSOCUT00000033121.1">
    <property type="protein sequence ID" value="ENSOCUP00000026181.1"/>
    <property type="gene ID" value="ENSOCUG00000029096.1"/>
</dbReference>
<dbReference type="GeneID" id="808231"/>
<dbReference type="KEGG" id="ocu:808231"/>
<dbReference type="CTD" id="4512"/>
<dbReference type="eggNOG" id="KOG4769">
    <property type="taxonomic scope" value="Eukaryota"/>
</dbReference>
<dbReference type="GeneTree" id="ENSGT00390000001518"/>
<dbReference type="HOGENOM" id="CLU_011899_7_3_1"/>
<dbReference type="InParanoid" id="O79429"/>
<dbReference type="OMA" id="WAMMSIG"/>
<dbReference type="OrthoDB" id="10002679at2759"/>
<dbReference type="TreeFam" id="TF353096"/>
<dbReference type="UniPathway" id="UPA00705"/>
<dbReference type="Proteomes" id="UP000001811">
    <property type="component" value="Mitochondrion"/>
</dbReference>
<dbReference type="Bgee" id="ENSOCUG00000029096">
    <property type="expression patterns" value="Expressed in prefrontal cortex and 15 other cell types or tissues"/>
</dbReference>
<dbReference type="ExpressionAtlas" id="O79429">
    <property type="expression patterns" value="baseline"/>
</dbReference>
<dbReference type="GO" id="GO:0005743">
    <property type="term" value="C:mitochondrial inner membrane"/>
    <property type="evidence" value="ECO:0007669"/>
    <property type="project" value="UniProtKB-SubCell"/>
</dbReference>
<dbReference type="GO" id="GO:0045277">
    <property type="term" value="C:respiratory chain complex IV"/>
    <property type="evidence" value="ECO:0000250"/>
    <property type="project" value="UniProtKB"/>
</dbReference>
<dbReference type="GO" id="GO:0004129">
    <property type="term" value="F:cytochrome-c oxidase activity"/>
    <property type="evidence" value="ECO:0007669"/>
    <property type="project" value="UniProtKB-EC"/>
</dbReference>
<dbReference type="GO" id="GO:0020037">
    <property type="term" value="F:heme binding"/>
    <property type="evidence" value="ECO:0007669"/>
    <property type="project" value="InterPro"/>
</dbReference>
<dbReference type="GO" id="GO:0046872">
    <property type="term" value="F:metal ion binding"/>
    <property type="evidence" value="ECO:0007669"/>
    <property type="project" value="UniProtKB-KW"/>
</dbReference>
<dbReference type="GO" id="GO:0015990">
    <property type="term" value="P:electron transport coupled proton transport"/>
    <property type="evidence" value="ECO:0007669"/>
    <property type="project" value="TreeGrafter"/>
</dbReference>
<dbReference type="GO" id="GO:0006123">
    <property type="term" value="P:mitochondrial electron transport, cytochrome c to oxygen"/>
    <property type="evidence" value="ECO:0007669"/>
    <property type="project" value="TreeGrafter"/>
</dbReference>
<dbReference type="CDD" id="cd01663">
    <property type="entry name" value="Cyt_c_Oxidase_I"/>
    <property type="match status" value="1"/>
</dbReference>
<dbReference type="FunFam" id="1.20.210.10:FF:000001">
    <property type="entry name" value="Cytochrome c oxidase subunit 1"/>
    <property type="match status" value="1"/>
</dbReference>
<dbReference type="Gene3D" id="1.20.210.10">
    <property type="entry name" value="Cytochrome c oxidase-like, subunit I domain"/>
    <property type="match status" value="1"/>
</dbReference>
<dbReference type="InterPro" id="IPR023616">
    <property type="entry name" value="Cyt_c_oxase-like_su1_dom"/>
</dbReference>
<dbReference type="InterPro" id="IPR036927">
    <property type="entry name" value="Cyt_c_oxase-like_su1_sf"/>
</dbReference>
<dbReference type="InterPro" id="IPR000883">
    <property type="entry name" value="Cyt_C_Oxase_1"/>
</dbReference>
<dbReference type="InterPro" id="IPR023615">
    <property type="entry name" value="Cyt_c_Oxase_su1_BS"/>
</dbReference>
<dbReference type="InterPro" id="IPR033944">
    <property type="entry name" value="Cyt_c_oxase_su1_dom"/>
</dbReference>
<dbReference type="PANTHER" id="PTHR10422">
    <property type="entry name" value="CYTOCHROME C OXIDASE SUBUNIT 1"/>
    <property type="match status" value="1"/>
</dbReference>
<dbReference type="PANTHER" id="PTHR10422:SF18">
    <property type="entry name" value="CYTOCHROME C OXIDASE SUBUNIT 1"/>
    <property type="match status" value="1"/>
</dbReference>
<dbReference type="Pfam" id="PF00115">
    <property type="entry name" value="COX1"/>
    <property type="match status" value="1"/>
</dbReference>
<dbReference type="PRINTS" id="PR01165">
    <property type="entry name" value="CYCOXIDASEI"/>
</dbReference>
<dbReference type="SUPFAM" id="SSF81442">
    <property type="entry name" value="Cytochrome c oxidase subunit I-like"/>
    <property type="match status" value="1"/>
</dbReference>
<dbReference type="PROSITE" id="PS50855">
    <property type="entry name" value="COX1"/>
    <property type="match status" value="1"/>
</dbReference>
<dbReference type="PROSITE" id="PS00077">
    <property type="entry name" value="COX1_CUB"/>
    <property type="match status" value="1"/>
</dbReference>
<organism>
    <name type="scientific">Oryctolagus cuniculus</name>
    <name type="common">Rabbit</name>
    <dbReference type="NCBI Taxonomy" id="9986"/>
    <lineage>
        <taxon>Eukaryota</taxon>
        <taxon>Metazoa</taxon>
        <taxon>Chordata</taxon>
        <taxon>Craniata</taxon>
        <taxon>Vertebrata</taxon>
        <taxon>Euteleostomi</taxon>
        <taxon>Mammalia</taxon>
        <taxon>Eutheria</taxon>
        <taxon>Euarchontoglires</taxon>
        <taxon>Glires</taxon>
        <taxon>Lagomorpha</taxon>
        <taxon>Leporidae</taxon>
        <taxon>Oryctolagus</taxon>
    </lineage>
</organism>
<sequence>MFVNRWLFSTNHKDIGTLYLLFGAWAGMVGTALSLLIRAELGQPGTLLGDDQIYNVIVTAHAFVMIFFMVMPIMIGGFGNWLVPLMIGAPDMAFPRMNNMSFWLLPPSFLLLLASSMVEAGAGTGWTVYPPLAGNLAHAGASVDLTIFSLHLAGVSSILGAINFITTIINMKAPAMSQYQTPLFVWSVLITAVLLLLSLPVLAAGITMLLTDRNLNTTFFDPAGGGDPILYQHLFWFFGHPEVYILILPGFGMISHIVTYYSGKKEPFGYMGMVWAMMSIGFLGFIVWAHHMFTVGMDVDTRAYFTSATMIIAIPTGVKVFSWLATLHGGNIKWSPAMLWALGFIFLFTVGGLTGIVLANSSLDIVLHDTYYVVAHFHYVLSMGAVFAIMGGFAHWFPLFSGYTLDPTWAKIHFTVMFVGVNLTFFPQHFLGLSGMPRRYSDYPDAYTMWNTVSSMGSFISLTAVMVMIFMIWEAFASKREVETIELTTTNLEWLHGCPPPYHTFEEPAFVKA</sequence>
<comment type="function">
    <text evidence="3">Component of the cytochrome c oxidase, the last enzyme in the mitochondrial electron transport chain which drives oxidative phosphorylation. The respiratory chain contains 3 multisubunit complexes succinate dehydrogenase (complex II, CII), ubiquinol-cytochrome c oxidoreductase (cytochrome b-c1 complex, complex III, CIII) and cytochrome c oxidase (complex IV, CIV), that cooperate to transfer electrons derived from NADH and succinate to molecular oxygen, creating an electrochemical gradient over the inner membrane that drives transmembrane transport and the ATP synthase. Cytochrome c oxidase is the component of the respiratory chain that catalyzes the reduction of oxygen to water. Electrons originating from reduced cytochrome c in the intermembrane space (IMS) are transferred via the dinuclear copper A center (CU(A)) of subunit 2 and heme A of subunit 1 to the active site in subunit 1, a binuclear center (BNC) formed by heme A3 and copper B (CU(B)). The BNC reduces molecular oxygen to 2 water molecules using 4 electrons from cytochrome c in the IMS and 4 protons from the mitochondrial matrix.</text>
</comment>
<comment type="catalytic activity">
    <reaction evidence="3">
        <text>4 Fe(II)-[cytochrome c] + O2 + 8 H(+)(in) = 4 Fe(III)-[cytochrome c] + 2 H2O + 4 H(+)(out)</text>
        <dbReference type="Rhea" id="RHEA:11436"/>
        <dbReference type="Rhea" id="RHEA-COMP:10350"/>
        <dbReference type="Rhea" id="RHEA-COMP:14399"/>
        <dbReference type="ChEBI" id="CHEBI:15377"/>
        <dbReference type="ChEBI" id="CHEBI:15378"/>
        <dbReference type="ChEBI" id="CHEBI:15379"/>
        <dbReference type="ChEBI" id="CHEBI:29033"/>
        <dbReference type="ChEBI" id="CHEBI:29034"/>
        <dbReference type="EC" id="7.1.1.9"/>
    </reaction>
    <physiologicalReaction direction="left-to-right" evidence="3">
        <dbReference type="Rhea" id="RHEA:11437"/>
    </physiologicalReaction>
</comment>
<comment type="cofactor">
    <cofactor evidence="2">
        <name>heme</name>
        <dbReference type="ChEBI" id="CHEBI:30413"/>
    </cofactor>
    <text evidence="2">Binds 2 heme A groups non-covalently per subunit.</text>
</comment>
<comment type="cofactor">
    <cofactor evidence="2">
        <name>Cu cation</name>
        <dbReference type="ChEBI" id="CHEBI:23378"/>
    </cofactor>
    <text evidence="2">Binds a copper B center.</text>
</comment>
<comment type="pathway">
    <text evidence="3">Energy metabolism; oxidative phosphorylation.</text>
</comment>
<comment type="subunit">
    <text evidence="1 2">Component of the cytochrome c oxidase (complex IV, CIV), a multisubunit enzyme composed of 14 subunits. The complex is composed of a catalytic core of 3 subunits MT-CO1, MT-CO2 and MT-CO3, encoded in the mitochondrial DNA, and 11 supernumerary subunits COX4I, COX5A, COX5B, COX6A, COX6B, COX6C, COX7A, COX7B, COX7C, COX8 and NDUFA4, which are encoded in the nuclear genome. The complex exists as a monomer or a dimer and forms supercomplexes (SCs) in the inner mitochondrial membrane with NADH-ubiquinone oxidoreductase (complex I, CI) and ubiquinol-cytochrome c oxidoreductase (cytochrome b-c1 complex, complex III, CIII), resulting in different assemblies (supercomplex SCI(1)III(2)IV(1) and megacomplex MCI(2)III(2)IV(2)) (By similarity). As a newly synthesized protein, rapidly incorporates into a multi-subunit assembly intermediate in the inner membrane, called MITRAC (mitochondrial translation regulation assembly intermediate of cytochrome c oxidase) complex, whose core components are COA3/MITRAC12 and COX14. Within the MITRAC complex, interacts with COA3 and with SMIM20/MITRAC7; the interaction with SMIM20 stabilizes the newly synthesized MT-CO1 and prevents its premature turnover. Interacts with TMEM177 in a COX20-dependent manner (By similarity).</text>
</comment>
<comment type="subcellular location">
    <subcellularLocation>
        <location evidence="2">Mitochondrion inner membrane</location>
        <topology evidence="2">Multi-pass membrane protein</topology>
    </subcellularLocation>
</comment>
<comment type="similarity">
    <text evidence="4">Belongs to the heme-copper respiratory oxidase family.</text>
</comment>
<accession>O79429</accession>
<name>COX1_RABIT</name>
<protein>
    <recommendedName>
        <fullName>Cytochrome c oxidase subunit 1</fullName>
        <ecNumber>7.1.1.9</ecNumber>
    </recommendedName>
    <alternativeName>
        <fullName>Cytochrome c oxidase polypeptide I</fullName>
    </alternativeName>
</protein>
<evidence type="ECO:0000250" key="1">
    <source>
        <dbReference type="UniProtKB" id="P00395"/>
    </source>
</evidence>
<evidence type="ECO:0000250" key="2">
    <source>
        <dbReference type="UniProtKB" id="P00396"/>
    </source>
</evidence>
<evidence type="ECO:0000250" key="3">
    <source>
        <dbReference type="UniProtKB" id="P00401"/>
    </source>
</evidence>
<evidence type="ECO:0000305" key="4"/>
<evidence type="ECO:0000312" key="5">
    <source>
        <dbReference type="Proteomes" id="UP000001811"/>
    </source>
</evidence>
<reference key="1">
    <citation type="journal article" date="1998" name="Genomics">
        <title>The complete mitochondrial DNA sequence of the rabbit, Oryctolagus cuniculus.</title>
        <authorList>
            <person name="Gissi C."/>
            <person name="Gullberg A."/>
            <person name="Arnason U."/>
        </authorList>
    </citation>
    <scope>NUCLEOTIDE SEQUENCE [LARGE SCALE GENOMIC DNA]</scope>
    <source>
        <strain evidence="5">Thorbecke</strain>
    </source>
</reference>
<gene>
    <name type="primary">MT-CO1</name>
    <name type="synonym">COI</name>
    <name type="synonym">COXI</name>
    <name type="synonym">MTCO1</name>
</gene>
<keyword id="KW-0106">Calcium</keyword>
<keyword id="KW-0186">Copper</keyword>
<keyword id="KW-0249">Electron transport</keyword>
<keyword id="KW-0349">Heme</keyword>
<keyword id="KW-0408">Iron</keyword>
<keyword id="KW-0460">Magnesium</keyword>
<keyword id="KW-0472">Membrane</keyword>
<keyword id="KW-0479">Metal-binding</keyword>
<keyword id="KW-0496">Mitochondrion</keyword>
<keyword id="KW-0999">Mitochondrion inner membrane</keyword>
<keyword id="KW-1185">Reference proteome</keyword>
<keyword id="KW-0679">Respiratory chain</keyword>
<keyword id="KW-0915">Sodium</keyword>
<keyword id="KW-1278">Translocase</keyword>
<keyword id="KW-0812">Transmembrane</keyword>
<keyword id="KW-1133">Transmembrane helix</keyword>
<keyword id="KW-0813">Transport</keyword>
<proteinExistence type="inferred from homology"/>
<geneLocation type="mitochondrion"/>
<feature type="chain" id="PRO_0000183404" description="Cytochrome c oxidase subunit 1">
    <location>
        <begin position="1"/>
        <end position="513"/>
    </location>
</feature>
<feature type="topological domain" description="Mitochondrial matrix" evidence="2">
    <location>
        <begin position="1"/>
        <end position="11"/>
    </location>
</feature>
<feature type="transmembrane region" description="Helical; Name=I" evidence="2">
    <location>
        <begin position="12"/>
        <end position="40"/>
    </location>
</feature>
<feature type="topological domain" description="Mitochondrial intermembrane" evidence="2">
    <location>
        <begin position="41"/>
        <end position="50"/>
    </location>
</feature>
<feature type="transmembrane region" description="Helical; Name=II" evidence="2">
    <location>
        <begin position="51"/>
        <end position="86"/>
    </location>
</feature>
<feature type="topological domain" description="Mitochondrial matrix" evidence="2">
    <location>
        <begin position="87"/>
        <end position="94"/>
    </location>
</feature>
<feature type="transmembrane region" description="Helical; Name=III" evidence="2">
    <location>
        <begin position="95"/>
        <end position="117"/>
    </location>
</feature>
<feature type="topological domain" description="Mitochondrial intermembrane" evidence="2">
    <location>
        <begin position="118"/>
        <end position="140"/>
    </location>
</feature>
<feature type="transmembrane region" description="Helical; Name=IV" evidence="2">
    <location>
        <begin position="141"/>
        <end position="170"/>
    </location>
</feature>
<feature type="topological domain" description="Mitochondrial matrix" evidence="2">
    <location>
        <begin position="171"/>
        <end position="182"/>
    </location>
</feature>
<feature type="transmembrane region" description="Helical; Name=V" evidence="2">
    <location>
        <begin position="183"/>
        <end position="212"/>
    </location>
</feature>
<feature type="topological domain" description="Mitochondrial intermembrane" evidence="2">
    <location>
        <begin position="213"/>
        <end position="227"/>
    </location>
</feature>
<feature type="transmembrane region" description="Helical; Name=VI" evidence="2">
    <location>
        <begin position="228"/>
        <end position="261"/>
    </location>
</feature>
<feature type="topological domain" description="Mitochondrial matrix" evidence="2">
    <location>
        <begin position="262"/>
        <end position="269"/>
    </location>
</feature>
<feature type="transmembrane region" description="Helical; Name=VII" evidence="2">
    <location>
        <begin position="270"/>
        <end position="286"/>
    </location>
</feature>
<feature type="topological domain" description="Mitochondrial intermembrane" evidence="2">
    <location>
        <begin position="287"/>
        <end position="298"/>
    </location>
</feature>
<feature type="transmembrane region" description="Helical; Name=VIII" evidence="2">
    <location>
        <begin position="299"/>
        <end position="327"/>
    </location>
</feature>
<feature type="topological domain" description="Mitochondrial matrix" evidence="2">
    <location>
        <begin position="328"/>
        <end position="335"/>
    </location>
</feature>
<feature type="transmembrane region" description="Helical; Name=IX" evidence="2">
    <location>
        <begin position="336"/>
        <end position="357"/>
    </location>
</feature>
<feature type="topological domain" description="Mitochondrial intermembrane" evidence="2">
    <location>
        <begin position="358"/>
        <end position="370"/>
    </location>
</feature>
<feature type="transmembrane region" description="Helical; Name=X" evidence="2">
    <location>
        <begin position="371"/>
        <end position="400"/>
    </location>
</feature>
<feature type="topological domain" description="Mitochondrial matrix" evidence="2">
    <location>
        <begin position="401"/>
        <end position="406"/>
    </location>
</feature>
<feature type="transmembrane region" description="Helical; Name=XI" evidence="2">
    <location>
        <begin position="407"/>
        <end position="433"/>
    </location>
</feature>
<feature type="topological domain" description="Mitochondrial intermembrane" evidence="2">
    <location>
        <begin position="434"/>
        <end position="446"/>
    </location>
</feature>
<feature type="transmembrane region" description="Helical; Name=XII" evidence="2">
    <location>
        <begin position="447"/>
        <end position="478"/>
    </location>
</feature>
<feature type="topological domain" description="Mitochondrial matrix" evidence="2">
    <location>
        <begin position="479"/>
        <end position="513"/>
    </location>
</feature>
<feature type="binding site" evidence="2">
    <location>
        <position position="40"/>
    </location>
    <ligand>
        <name>Na(+)</name>
        <dbReference type="ChEBI" id="CHEBI:29101"/>
    </ligand>
</feature>
<feature type="binding site" evidence="2">
    <location>
        <position position="45"/>
    </location>
    <ligand>
        <name>Na(+)</name>
        <dbReference type="ChEBI" id="CHEBI:29101"/>
    </ligand>
</feature>
<feature type="binding site" description="axial binding residue" evidence="2">
    <location>
        <position position="61"/>
    </location>
    <ligand>
        <name>Fe(II)-heme a</name>
        <dbReference type="ChEBI" id="CHEBI:61715"/>
        <note>low-spin</note>
    </ligand>
    <ligandPart>
        <name>Fe</name>
        <dbReference type="ChEBI" id="CHEBI:18248"/>
    </ligandPart>
</feature>
<feature type="binding site" evidence="2">
    <location>
        <position position="240"/>
    </location>
    <ligand>
        <name>Cu cation</name>
        <dbReference type="ChEBI" id="CHEBI:23378"/>
        <label>B</label>
    </ligand>
</feature>
<feature type="binding site" evidence="2">
    <location>
        <position position="244"/>
    </location>
    <ligand>
        <name>O2</name>
        <dbReference type="ChEBI" id="CHEBI:15379"/>
    </ligand>
</feature>
<feature type="binding site" evidence="2">
    <location>
        <position position="290"/>
    </location>
    <ligand>
        <name>Cu cation</name>
        <dbReference type="ChEBI" id="CHEBI:23378"/>
        <label>B</label>
    </ligand>
</feature>
<feature type="binding site" evidence="2">
    <location>
        <position position="291"/>
    </location>
    <ligand>
        <name>Cu cation</name>
        <dbReference type="ChEBI" id="CHEBI:23378"/>
        <label>B</label>
    </ligand>
</feature>
<feature type="binding site" evidence="2">
    <location>
        <position position="368"/>
    </location>
    <ligand>
        <name>Mg(2+)</name>
        <dbReference type="ChEBI" id="CHEBI:18420"/>
        <note>ligand shared with MT-CO2</note>
    </ligand>
</feature>
<feature type="binding site" evidence="2">
    <location>
        <position position="369"/>
    </location>
    <ligand>
        <name>Mg(2+)</name>
        <dbReference type="ChEBI" id="CHEBI:18420"/>
        <note>ligand shared with MT-CO2</note>
    </ligand>
</feature>
<feature type="binding site" description="axial binding residue" evidence="2">
    <location>
        <position position="376"/>
    </location>
    <ligand>
        <name>heme a3</name>
        <dbReference type="ChEBI" id="CHEBI:83282"/>
        <note>high-spin</note>
    </ligand>
    <ligandPart>
        <name>Fe</name>
        <dbReference type="ChEBI" id="CHEBI:18248"/>
    </ligandPart>
</feature>
<feature type="binding site" description="axial binding residue" evidence="2">
    <location>
        <position position="378"/>
    </location>
    <ligand>
        <name>Fe(II)-heme a</name>
        <dbReference type="ChEBI" id="CHEBI:61715"/>
        <note>low-spin</note>
    </ligand>
    <ligandPart>
        <name>Fe</name>
        <dbReference type="ChEBI" id="CHEBI:18248"/>
    </ligandPart>
</feature>
<feature type="binding site" evidence="2">
    <location>
        <position position="441"/>
    </location>
    <ligand>
        <name>Na(+)</name>
        <dbReference type="ChEBI" id="CHEBI:29101"/>
    </ligand>
</feature>
<feature type="cross-link" description="1'-histidyl-3'-tyrosine (His-Tyr)" evidence="2">
    <location>
        <begin position="240"/>
        <end position="244"/>
    </location>
</feature>